<name>ARGR_ECOUT</name>
<comment type="function">
    <text evidence="1">Regulates arginine biosynthesis genes.</text>
</comment>
<comment type="pathway">
    <text>Amino-acid biosynthesis; L-arginine biosynthesis [regulation].</text>
</comment>
<comment type="subcellular location">
    <subcellularLocation>
        <location evidence="1">Cytoplasm</location>
    </subcellularLocation>
</comment>
<comment type="similarity">
    <text evidence="1">Belongs to the ArgR family.</text>
</comment>
<protein>
    <recommendedName>
        <fullName evidence="1">Arginine repressor</fullName>
    </recommendedName>
</protein>
<organism>
    <name type="scientific">Escherichia coli (strain UTI89 / UPEC)</name>
    <dbReference type="NCBI Taxonomy" id="364106"/>
    <lineage>
        <taxon>Bacteria</taxon>
        <taxon>Pseudomonadati</taxon>
        <taxon>Pseudomonadota</taxon>
        <taxon>Gammaproteobacteria</taxon>
        <taxon>Enterobacterales</taxon>
        <taxon>Enterobacteriaceae</taxon>
        <taxon>Escherichia</taxon>
    </lineage>
</organism>
<keyword id="KW-0028">Amino-acid biosynthesis</keyword>
<keyword id="KW-0055">Arginine biosynthesis</keyword>
<keyword id="KW-0963">Cytoplasm</keyword>
<keyword id="KW-0238">DNA-binding</keyword>
<keyword id="KW-0678">Repressor</keyword>
<keyword id="KW-0804">Transcription</keyword>
<keyword id="KW-0805">Transcription regulation</keyword>
<proteinExistence type="inferred from homology"/>
<evidence type="ECO:0000255" key="1">
    <source>
        <dbReference type="HAMAP-Rule" id="MF_00173"/>
    </source>
</evidence>
<reference key="1">
    <citation type="journal article" date="2006" name="Proc. Natl. Acad. Sci. U.S.A.">
        <title>Identification of genes subject to positive selection in uropathogenic strains of Escherichia coli: a comparative genomics approach.</title>
        <authorList>
            <person name="Chen S.L."/>
            <person name="Hung C.-S."/>
            <person name="Xu J."/>
            <person name="Reigstad C.S."/>
            <person name="Magrini V."/>
            <person name="Sabo A."/>
            <person name="Blasiar D."/>
            <person name="Bieri T."/>
            <person name="Meyer R.R."/>
            <person name="Ozersky P."/>
            <person name="Armstrong J.R."/>
            <person name="Fulton R.S."/>
            <person name="Latreille J.P."/>
            <person name="Spieth J."/>
            <person name="Hooton T.M."/>
            <person name="Mardis E.R."/>
            <person name="Hultgren S.J."/>
            <person name="Gordon J.I."/>
        </authorList>
    </citation>
    <scope>NUCLEOTIDE SEQUENCE [LARGE SCALE GENOMIC DNA]</scope>
    <source>
        <strain>UTI89 / UPEC</strain>
    </source>
</reference>
<dbReference type="EMBL" id="CP000243">
    <property type="protein sequence ID" value="ABE09112.1"/>
    <property type="molecule type" value="Genomic_DNA"/>
</dbReference>
<dbReference type="RefSeq" id="WP_001257847.1">
    <property type="nucleotide sequence ID" value="NZ_CP064825.1"/>
</dbReference>
<dbReference type="SMR" id="Q1R6A2"/>
<dbReference type="KEGG" id="eci:UTI89_C3668"/>
<dbReference type="HOGENOM" id="CLU_097103_2_0_6"/>
<dbReference type="UniPathway" id="UPA00068"/>
<dbReference type="Proteomes" id="UP000001952">
    <property type="component" value="Chromosome"/>
</dbReference>
<dbReference type="GO" id="GO:0005737">
    <property type="term" value="C:cytoplasm"/>
    <property type="evidence" value="ECO:0007669"/>
    <property type="project" value="UniProtKB-SubCell"/>
</dbReference>
<dbReference type="GO" id="GO:0034618">
    <property type="term" value="F:arginine binding"/>
    <property type="evidence" value="ECO:0007669"/>
    <property type="project" value="InterPro"/>
</dbReference>
<dbReference type="GO" id="GO:0003677">
    <property type="term" value="F:DNA binding"/>
    <property type="evidence" value="ECO:0007669"/>
    <property type="project" value="UniProtKB-KW"/>
</dbReference>
<dbReference type="GO" id="GO:0003700">
    <property type="term" value="F:DNA-binding transcription factor activity"/>
    <property type="evidence" value="ECO:0007669"/>
    <property type="project" value="UniProtKB-UniRule"/>
</dbReference>
<dbReference type="GO" id="GO:0006526">
    <property type="term" value="P:L-arginine biosynthetic process"/>
    <property type="evidence" value="ECO:0007669"/>
    <property type="project" value="UniProtKB-UniPathway"/>
</dbReference>
<dbReference type="GO" id="GO:0051259">
    <property type="term" value="P:protein complex oligomerization"/>
    <property type="evidence" value="ECO:0007669"/>
    <property type="project" value="InterPro"/>
</dbReference>
<dbReference type="GO" id="GO:1900079">
    <property type="term" value="P:regulation of arginine biosynthetic process"/>
    <property type="evidence" value="ECO:0007669"/>
    <property type="project" value="UniProtKB-UniRule"/>
</dbReference>
<dbReference type="FunFam" id="1.10.10.10:FF:000074">
    <property type="entry name" value="Arginine repressor"/>
    <property type="match status" value="1"/>
</dbReference>
<dbReference type="FunFam" id="3.30.1360.40:FF:000004">
    <property type="entry name" value="Arginine repressor"/>
    <property type="match status" value="1"/>
</dbReference>
<dbReference type="Gene3D" id="3.30.1360.40">
    <property type="match status" value="1"/>
</dbReference>
<dbReference type="Gene3D" id="1.10.10.10">
    <property type="entry name" value="Winged helix-like DNA-binding domain superfamily/Winged helix DNA-binding domain"/>
    <property type="match status" value="1"/>
</dbReference>
<dbReference type="HAMAP" id="MF_00173">
    <property type="entry name" value="Arg_repressor"/>
    <property type="match status" value="1"/>
</dbReference>
<dbReference type="InterPro" id="IPR001669">
    <property type="entry name" value="Arg_repress"/>
</dbReference>
<dbReference type="InterPro" id="IPR020899">
    <property type="entry name" value="Arg_repress_C"/>
</dbReference>
<dbReference type="InterPro" id="IPR036251">
    <property type="entry name" value="Arg_repress_C_sf"/>
</dbReference>
<dbReference type="InterPro" id="IPR020900">
    <property type="entry name" value="Arg_repress_DNA-bd"/>
</dbReference>
<dbReference type="InterPro" id="IPR036388">
    <property type="entry name" value="WH-like_DNA-bd_sf"/>
</dbReference>
<dbReference type="InterPro" id="IPR036390">
    <property type="entry name" value="WH_DNA-bd_sf"/>
</dbReference>
<dbReference type="NCBIfam" id="TIGR01529">
    <property type="entry name" value="argR_whole"/>
    <property type="match status" value="1"/>
</dbReference>
<dbReference type="NCBIfam" id="NF003457">
    <property type="entry name" value="PRK05066.1"/>
    <property type="match status" value="1"/>
</dbReference>
<dbReference type="PANTHER" id="PTHR34471">
    <property type="entry name" value="ARGININE REPRESSOR"/>
    <property type="match status" value="1"/>
</dbReference>
<dbReference type="PANTHER" id="PTHR34471:SF1">
    <property type="entry name" value="ARGININE REPRESSOR"/>
    <property type="match status" value="1"/>
</dbReference>
<dbReference type="Pfam" id="PF01316">
    <property type="entry name" value="Arg_repressor"/>
    <property type="match status" value="1"/>
</dbReference>
<dbReference type="Pfam" id="PF02863">
    <property type="entry name" value="Arg_repressor_C"/>
    <property type="match status" value="1"/>
</dbReference>
<dbReference type="PRINTS" id="PR01467">
    <property type="entry name" value="ARGREPRESSOR"/>
</dbReference>
<dbReference type="SUPFAM" id="SSF55252">
    <property type="entry name" value="C-terminal domain of arginine repressor"/>
    <property type="match status" value="1"/>
</dbReference>
<dbReference type="SUPFAM" id="SSF46785">
    <property type="entry name" value="Winged helix' DNA-binding domain"/>
    <property type="match status" value="1"/>
</dbReference>
<feature type="chain" id="PRO_1000023565" description="Arginine repressor">
    <location>
        <begin position="1"/>
        <end position="156"/>
    </location>
</feature>
<gene>
    <name evidence="1" type="primary">argR</name>
    <name type="ordered locus">UTI89_C3668</name>
</gene>
<accession>Q1R6A2</accession>
<sequence>MRSSAKQEELVKAFKALLKEEKFSSQGEIVAALQEQGFDNINQSKVSRMLTKFGAVRTRNAKMEMVYCLPAELGVPTTSSPLKNLVLDIDYNDAVVVIHTSPGAAQLIARLLDSLGKAEGILGTIAGDDTIFTTPANGFTVKELYEAILELFDQEL</sequence>